<dbReference type="EMBL" id="CR382139">
    <property type="protein sequence ID" value="CAG90205.2"/>
    <property type="molecule type" value="Genomic_DNA"/>
</dbReference>
<dbReference type="RefSeq" id="XP_461748.2">
    <property type="nucleotide sequence ID" value="XM_461748.2"/>
</dbReference>
<dbReference type="STRING" id="284592.Q6BJ73"/>
<dbReference type="GeneID" id="2904624"/>
<dbReference type="KEGG" id="dha:DEHA2G04664g"/>
<dbReference type="VEuPathDB" id="FungiDB:DEHA2G04664g"/>
<dbReference type="eggNOG" id="ENOG502RZY8">
    <property type="taxonomic scope" value="Eukaryota"/>
</dbReference>
<dbReference type="HOGENOM" id="CLU_091434_0_0_1"/>
<dbReference type="InParanoid" id="Q6BJ73"/>
<dbReference type="OMA" id="AMAGETH"/>
<dbReference type="OrthoDB" id="5577072at2759"/>
<dbReference type="Proteomes" id="UP000000599">
    <property type="component" value="Chromosome G"/>
</dbReference>
<dbReference type="GO" id="GO:0005681">
    <property type="term" value="C:spliceosomal complex"/>
    <property type="evidence" value="ECO:0007669"/>
    <property type="project" value="UniProtKB-KW"/>
</dbReference>
<dbReference type="GO" id="GO:0000398">
    <property type="term" value="P:mRNA splicing, via spliceosome"/>
    <property type="evidence" value="ECO:0007669"/>
    <property type="project" value="InterPro"/>
</dbReference>
<dbReference type="InterPro" id="IPR045166">
    <property type="entry name" value="Spp2-like"/>
</dbReference>
<dbReference type="InterPro" id="IPR026822">
    <property type="entry name" value="Spp2/MOS2_G-patch"/>
</dbReference>
<dbReference type="PANTHER" id="PTHR15818">
    <property type="entry name" value="G PATCH AND KOW-CONTAINING"/>
    <property type="match status" value="1"/>
</dbReference>
<dbReference type="PANTHER" id="PTHR15818:SF2">
    <property type="entry name" value="G-PATCH DOMAIN AND KOW MOTIFS-CONTAINING PROTEIN"/>
    <property type="match status" value="1"/>
</dbReference>
<dbReference type="Pfam" id="PF12656">
    <property type="entry name" value="G-patch_2"/>
    <property type="match status" value="1"/>
</dbReference>
<protein>
    <recommendedName>
        <fullName>Pre-mRNA-splicing factor SPP2</fullName>
    </recommendedName>
</protein>
<reference key="1">
    <citation type="journal article" date="2004" name="Nature">
        <title>Genome evolution in yeasts.</title>
        <authorList>
            <person name="Dujon B."/>
            <person name="Sherman D."/>
            <person name="Fischer G."/>
            <person name="Durrens P."/>
            <person name="Casaregola S."/>
            <person name="Lafontaine I."/>
            <person name="de Montigny J."/>
            <person name="Marck C."/>
            <person name="Neuveglise C."/>
            <person name="Talla E."/>
            <person name="Goffard N."/>
            <person name="Frangeul L."/>
            <person name="Aigle M."/>
            <person name="Anthouard V."/>
            <person name="Babour A."/>
            <person name="Barbe V."/>
            <person name="Barnay S."/>
            <person name="Blanchin S."/>
            <person name="Beckerich J.-M."/>
            <person name="Beyne E."/>
            <person name="Bleykasten C."/>
            <person name="Boisrame A."/>
            <person name="Boyer J."/>
            <person name="Cattolico L."/>
            <person name="Confanioleri F."/>
            <person name="de Daruvar A."/>
            <person name="Despons L."/>
            <person name="Fabre E."/>
            <person name="Fairhead C."/>
            <person name="Ferry-Dumazet H."/>
            <person name="Groppi A."/>
            <person name="Hantraye F."/>
            <person name="Hennequin C."/>
            <person name="Jauniaux N."/>
            <person name="Joyet P."/>
            <person name="Kachouri R."/>
            <person name="Kerrest A."/>
            <person name="Koszul R."/>
            <person name="Lemaire M."/>
            <person name="Lesur I."/>
            <person name="Ma L."/>
            <person name="Muller H."/>
            <person name="Nicaud J.-M."/>
            <person name="Nikolski M."/>
            <person name="Oztas S."/>
            <person name="Ozier-Kalogeropoulos O."/>
            <person name="Pellenz S."/>
            <person name="Potier S."/>
            <person name="Richard G.-F."/>
            <person name="Straub M.-L."/>
            <person name="Suleau A."/>
            <person name="Swennen D."/>
            <person name="Tekaia F."/>
            <person name="Wesolowski-Louvel M."/>
            <person name="Westhof E."/>
            <person name="Wirth B."/>
            <person name="Zeniou-Meyer M."/>
            <person name="Zivanovic Y."/>
            <person name="Bolotin-Fukuhara M."/>
            <person name="Thierry A."/>
            <person name="Bouchier C."/>
            <person name="Caudron B."/>
            <person name="Scarpelli C."/>
            <person name="Gaillardin C."/>
            <person name="Weissenbach J."/>
            <person name="Wincker P."/>
            <person name="Souciet J.-L."/>
        </authorList>
    </citation>
    <scope>NUCLEOTIDE SEQUENCE [LARGE SCALE GENOMIC DNA]</scope>
    <source>
        <strain>ATCC 36239 / CBS 767 / BCRC 21394 / JCM 1990 / NBRC 0083 / IGC 2968</strain>
    </source>
</reference>
<gene>
    <name type="primary">SPP2</name>
    <name type="ordered locus">DEHA2G04664g</name>
</gene>
<organism>
    <name type="scientific">Debaryomyces hansenii (strain ATCC 36239 / CBS 767 / BCRC 21394 / JCM 1990 / NBRC 0083 / IGC 2968)</name>
    <name type="common">Yeast</name>
    <name type="synonym">Torulaspora hansenii</name>
    <dbReference type="NCBI Taxonomy" id="284592"/>
    <lineage>
        <taxon>Eukaryota</taxon>
        <taxon>Fungi</taxon>
        <taxon>Dikarya</taxon>
        <taxon>Ascomycota</taxon>
        <taxon>Saccharomycotina</taxon>
        <taxon>Pichiomycetes</taxon>
        <taxon>Debaryomycetaceae</taxon>
        <taxon>Debaryomyces</taxon>
    </lineage>
</organism>
<accession>Q6BJ73</accession>
<name>SPP2_DEBHA</name>
<keyword id="KW-0507">mRNA processing</keyword>
<keyword id="KW-0508">mRNA splicing</keyword>
<keyword id="KW-0539">Nucleus</keyword>
<keyword id="KW-1185">Reference proteome</keyword>
<keyword id="KW-0747">Spliceosome</keyword>
<feature type="chain" id="PRO_0000218522" description="Pre-mRNA-splicing factor SPP2">
    <location>
        <begin position="1"/>
        <end position="293"/>
    </location>
</feature>
<feature type="region of interest" description="Disordered" evidence="2">
    <location>
        <begin position="1"/>
        <end position="65"/>
    </location>
</feature>
<feature type="region of interest" description="Disordered" evidence="2">
    <location>
        <begin position="142"/>
        <end position="168"/>
    </location>
</feature>
<comment type="function">
    <text evidence="1">Involved in spliceosome maturation and the first step of pre-mRNA splicing.</text>
</comment>
<comment type="subunit">
    <text evidence="1">Associated with the spliceosome.</text>
</comment>
<comment type="subcellular location">
    <subcellularLocation>
        <location evidence="1">Nucleus</location>
    </subcellularLocation>
</comment>
<comment type="similarity">
    <text evidence="3">Belongs to the SPP2 family.</text>
</comment>
<sequence length="293" mass="32357">MAGFQMNLKKDKINKPNSQSKPKISFAFGGSKTNIIPKKSIASSQKNETRKLNPNALLGSESESEGEDAVVAIDSFDKKKGGAIAGNKAVNTKVTEPLIIKPTTASRDWKEEIRKKQNSMYIPNQEHRQKVIAKDDNNLEFGLSVPEKSNSKESVVDAESNDTMSKEERIRSSLLKGEELDDKGLIIPIPSEDEIVEQDISSKPDEDSIEQYKEVPVDQFGAALLRGMGWKQNKGKNIESAGKPLLERRKKGVLLGIGAKAVEDELMADLLVKRGAKFDIPVVRRNKDLNATK</sequence>
<proteinExistence type="inferred from homology"/>
<evidence type="ECO:0000250" key="1"/>
<evidence type="ECO:0000256" key="2">
    <source>
        <dbReference type="SAM" id="MobiDB-lite"/>
    </source>
</evidence>
<evidence type="ECO:0000305" key="3"/>